<accession>A5IGL5</accession>
<organism>
    <name type="scientific">Legionella pneumophila (strain Corby)</name>
    <dbReference type="NCBI Taxonomy" id="400673"/>
    <lineage>
        <taxon>Bacteria</taxon>
        <taxon>Pseudomonadati</taxon>
        <taxon>Pseudomonadota</taxon>
        <taxon>Gammaproteobacteria</taxon>
        <taxon>Legionellales</taxon>
        <taxon>Legionellaceae</taxon>
        <taxon>Legionella</taxon>
    </lineage>
</organism>
<evidence type="ECO:0000255" key="1">
    <source>
        <dbReference type="HAMAP-Rule" id="MF_01569"/>
    </source>
</evidence>
<sequence length="569" mass="64190">MRASQWFLVTQKETPNDAEIASHQLMLRSGMIRKLGSGLYTWMPLGLRVLRKVENIVREEMNKTHAMELLMPSVQPAELWQETGRWETFGGQLLTMKDSNQREYCFGPTHEEVITDIMRNELQSYKQLPVNFYQIQTKFRDEIRPRFGVMRAREFIMKDAYSFHLSIESLQETYKDMYQAYCRIFDRMGLKYRAVEADTGAIGGSASHEFQVLAESGEDLIFYSDASDYAANIEQATSLKPPKANQACNETITLVDTPNQKTIDEVASFLGIASNQTIKTLIVKGKEHPMVALVLRGDDELNEVKATKHPLVHSPLSFIDEELILKTLKTPLGSIGPIQLNIPVIVDHHALAMPSFVCGANQADKHFINAAWERDAKYDDAYDLRNVKEGDPSPDGRGMLHCCRGIEVGHVFQLGDKYAKAMNASVINEQGQLQTMIMGCYGLGITRVVAAAIEQHHDEHGIIWPQALAPFQVNIIPLNGARSQTVKEQAESLYQQLKSHGIDVLLDDRNERAGVLFADNDLIGIPHRLVVSERNLEQGCIEYKSRTSSETQLINLDKVVNFIIELINK</sequence>
<dbReference type="EC" id="6.1.1.15" evidence="1"/>
<dbReference type="EMBL" id="CP000675">
    <property type="protein sequence ID" value="ABQ56515.1"/>
    <property type="molecule type" value="Genomic_DNA"/>
</dbReference>
<dbReference type="RefSeq" id="WP_011945843.1">
    <property type="nucleotide sequence ID" value="NC_009494.2"/>
</dbReference>
<dbReference type="SMR" id="A5IGL5"/>
<dbReference type="KEGG" id="lpc:LPC_2600"/>
<dbReference type="HOGENOM" id="CLU_016739_0_0_6"/>
<dbReference type="GO" id="GO:0005829">
    <property type="term" value="C:cytosol"/>
    <property type="evidence" value="ECO:0007669"/>
    <property type="project" value="TreeGrafter"/>
</dbReference>
<dbReference type="GO" id="GO:0002161">
    <property type="term" value="F:aminoacyl-tRNA deacylase activity"/>
    <property type="evidence" value="ECO:0007669"/>
    <property type="project" value="InterPro"/>
</dbReference>
<dbReference type="GO" id="GO:0005524">
    <property type="term" value="F:ATP binding"/>
    <property type="evidence" value="ECO:0007669"/>
    <property type="project" value="UniProtKB-UniRule"/>
</dbReference>
<dbReference type="GO" id="GO:0004827">
    <property type="term" value="F:proline-tRNA ligase activity"/>
    <property type="evidence" value="ECO:0007669"/>
    <property type="project" value="UniProtKB-UniRule"/>
</dbReference>
<dbReference type="GO" id="GO:0006433">
    <property type="term" value="P:prolyl-tRNA aminoacylation"/>
    <property type="evidence" value="ECO:0007669"/>
    <property type="project" value="UniProtKB-UniRule"/>
</dbReference>
<dbReference type="CDD" id="cd04334">
    <property type="entry name" value="ProRS-INS"/>
    <property type="match status" value="1"/>
</dbReference>
<dbReference type="CDD" id="cd00861">
    <property type="entry name" value="ProRS_anticodon_short"/>
    <property type="match status" value="1"/>
</dbReference>
<dbReference type="CDD" id="cd00779">
    <property type="entry name" value="ProRS_core_prok"/>
    <property type="match status" value="1"/>
</dbReference>
<dbReference type="FunFam" id="3.30.930.10:FF:000043">
    <property type="entry name" value="Proline--tRNA ligase"/>
    <property type="match status" value="1"/>
</dbReference>
<dbReference type="Gene3D" id="3.40.50.800">
    <property type="entry name" value="Anticodon-binding domain"/>
    <property type="match status" value="1"/>
</dbReference>
<dbReference type="Gene3D" id="3.30.930.10">
    <property type="entry name" value="Bira Bifunctional Protein, Domain 2"/>
    <property type="match status" value="2"/>
</dbReference>
<dbReference type="HAMAP" id="MF_01569">
    <property type="entry name" value="Pro_tRNA_synth_type1"/>
    <property type="match status" value="1"/>
</dbReference>
<dbReference type="InterPro" id="IPR002314">
    <property type="entry name" value="aa-tRNA-synt_IIb"/>
</dbReference>
<dbReference type="InterPro" id="IPR006195">
    <property type="entry name" value="aa-tRNA-synth_II"/>
</dbReference>
<dbReference type="InterPro" id="IPR045864">
    <property type="entry name" value="aa-tRNA-synth_II/BPL/LPL"/>
</dbReference>
<dbReference type="InterPro" id="IPR004154">
    <property type="entry name" value="Anticodon-bd"/>
</dbReference>
<dbReference type="InterPro" id="IPR036621">
    <property type="entry name" value="Anticodon-bd_dom_sf"/>
</dbReference>
<dbReference type="InterPro" id="IPR002316">
    <property type="entry name" value="Pro-tRNA-ligase_IIa"/>
</dbReference>
<dbReference type="InterPro" id="IPR004500">
    <property type="entry name" value="Pro-tRNA-synth_IIa_bac-type"/>
</dbReference>
<dbReference type="InterPro" id="IPR023717">
    <property type="entry name" value="Pro-tRNA-Synthase_IIa_type1"/>
</dbReference>
<dbReference type="InterPro" id="IPR050062">
    <property type="entry name" value="Pro-tRNA_synthetase"/>
</dbReference>
<dbReference type="InterPro" id="IPR044140">
    <property type="entry name" value="ProRS_anticodon_short"/>
</dbReference>
<dbReference type="InterPro" id="IPR033730">
    <property type="entry name" value="ProRS_core_prok"/>
</dbReference>
<dbReference type="InterPro" id="IPR036754">
    <property type="entry name" value="YbaK/aa-tRNA-synt-asso_dom_sf"/>
</dbReference>
<dbReference type="InterPro" id="IPR007214">
    <property type="entry name" value="YbaK/aa-tRNA-synth-assoc-dom"/>
</dbReference>
<dbReference type="NCBIfam" id="NF006625">
    <property type="entry name" value="PRK09194.1"/>
    <property type="match status" value="1"/>
</dbReference>
<dbReference type="NCBIfam" id="TIGR00409">
    <property type="entry name" value="proS_fam_II"/>
    <property type="match status" value="1"/>
</dbReference>
<dbReference type="PANTHER" id="PTHR42753">
    <property type="entry name" value="MITOCHONDRIAL RIBOSOME PROTEIN L39/PROLYL-TRNA LIGASE FAMILY MEMBER"/>
    <property type="match status" value="1"/>
</dbReference>
<dbReference type="PANTHER" id="PTHR42753:SF2">
    <property type="entry name" value="PROLINE--TRNA LIGASE"/>
    <property type="match status" value="1"/>
</dbReference>
<dbReference type="Pfam" id="PF03129">
    <property type="entry name" value="HGTP_anticodon"/>
    <property type="match status" value="1"/>
</dbReference>
<dbReference type="Pfam" id="PF00587">
    <property type="entry name" value="tRNA-synt_2b"/>
    <property type="match status" value="1"/>
</dbReference>
<dbReference type="Pfam" id="PF04073">
    <property type="entry name" value="tRNA_edit"/>
    <property type="match status" value="1"/>
</dbReference>
<dbReference type="PIRSF" id="PIRSF001535">
    <property type="entry name" value="ProRS_1"/>
    <property type="match status" value="1"/>
</dbReference>
<dbReference type="PRINTS" id="PR01046">
    <property type="entry name" value="TRNASYNTHPRO"/>
</dbReference>
<dbReference type="SUPFAM" id="SSF52954">
    <property type="entry name" value="Class II aaRS ABD-related"/>
    <property type="match status" value="1"/>
</dbReference>
<dbReference type="SUPFAM" id="SSF55681">
    <property type="entry name" value="Class II aaRS and biotin synthetases"/>
    <property type="match status" value="1"/>
</dbReference>
<dbReference type="SUPFAM" id="SSF55826">
    <property type="entry name" value="YbaK/ProRS associated domain"/>
    <property type="match status" value="1"/>
</dbReference>
<dbReference type="PROSITE" id="PS50862">
    <property type="entry name" value="AA_TRNA_LIGASE_II"/>
    <property type="match status" value="1"/>
</dbReference>
<reference key="1">
    <citation type="submission" date="2006-11" db="EMBL/GenBank/DDBJ databases">
        <title>Identification and characterization of a new conjugation/ type IVA secretion system (trb/tra) of L. pneumophila Corby localized on a mobile genomic island.</title>
        <authorList>
            <person name="Gloeckner G."/>
            <person name="Albert-Weissenberger C."/>
            <person name="Weinmann E."/>
            <person name="Jacobi S."/>
            <person name="Schunder E."/>
            <person name="Steinert M."/>
            <person name="Buchrieser C."/>
            <person name="Hacker J."/>
            <person name="Heuner K."/>
        </authorList>
    </citation>
    <scope>NUCLEOTIDE SEQUENCE [LARGE SCALE GENOMIC DNA]</scope>
    <source>
        <strain>Corby</strain>
    </source>
</reference>
<comment type="function">
    <text evidence="1">Catalyzes the attachment of proline to tRNA(Pro) in a two-step reaction: proline is first activated by ATP to form Pro-AMP and then transferred to the acceptor end of tRNA(Pro). As ProRS can inadvertently accommodate and process non-cognate amino acids such as alanine and cysteine, to avoid such errors it has two additional distinct editing activities against alanine. One activity is designated as 'pretransfer' editing and involves the tRNA(Pro)-independent hydrolysis of activated Ala-AMP. The other activity is designated 'posttransfer' editing and involves deacylation of mischarged Ala-tRNA(Pro). The misacylated Cys-tRNA(Pro) is not edited by ProRS.</text>
</comment>
<comment type="catalytic activity">
    <reaction evidence="1">
        <text>tRNA(Pro) + L-proline + ATP = L-prolyl-tRNA(Pro) + AMP + diphosphate</text>
        <dbReference type="Rhea" id="RHEA:14305"/>
        <dbReference type="Rhea" id="RHEA-COMP:9700"/>
        <dbReference type="Rhea" id="RHEA-COMP:9702"/>
        <dbReference type="ChEBI" id="CHEBI:30616"/>
        <dbReference type="ChEBI" id="CHEBI:33019"/>
        <dbReference type="ChEBI" id="CHEBI:60039"/>
        <dbReference type="ChEBI" id="CHEBI:78442"/>
        <dbReference type="ChEBI" id="CHEBI:78532"/>
        <dbReference type="ChEBI" id="CHEBI:456215"/>
        <dbReference type="EC" id="6.1.1.15"/>
    </reaction>
</comment>
<comment type="subunit">
    <text evidence="1">Homodimer.</text>
</comment>
<comment type="subcellular location">
    <subcellularLocation>
        <location evidence="1">Cytoplasm</location>
    </subcellularLocation>
</comment>
<comment type="domain">
    <text evidence="1">Consists of three domains: the N-terminal catalytic domain, the editing domain and the C-terminal anticodon-binding domain.</text>
</comment>
<comment type="similarity">
    <text evidence="1">Belongs to the class-II aminoacyl-tRNA synthetase family. ProS type 1 subfamily.</text>
</comment>
<gene>
    <name evidence="1" type="primary">proS</name>
    <name type="ordered locus">LPC_2600</name>
</gene>
<protein>
    <recommendedName>
        <fullName evidence="1">Proline--tRNA ligase</fullName>
        <ecNumber evidence="1">6.1.1.15</ecNumber>
    </recommendedName>
    <alternativeName>
        <fullName evidence="1">Prolyl-tRNA synthetase</fullName>
        <shortName evidence="1">ProRS</shortName>
    </alternativeName>
</protein>
<name>SYP_LEGPC</name>
<keyword id="KW-0030">Aminoacyl-tRNA synthetase</keyword>
<keyword id="KW-0067">ATP-binding</keyword>
<keyword id="KW-0963">Cytoplasm</keyword>
<keyword id="KW-0436">Ligase</keyword>
<keyword id="KW-0547">Nucleotide-binding</keyword>
<keyword id="KW-0648">Protein biosynthesis</keyword>
<feature type="chain" id="PRO_1000069149" description="Proline--tRNA ligase">
    <location>
        <begin position="1"/>
        <end position="569"/>
    </location>
</feature>
<proteinExistence type="inferred from homology"/>